<organism>
    <name type="scientific">Flavobacterium psychrophilum (strain ATCC 49511 / DSM 21280 / CIP 103535 / JIP02/86)</name>
    <dbReference type="NCBI Taxonomy" id="402612"/>
    <lineage>
        <taxon>Bacteria</taxon>
        <taxon>Pseudomonadati</taxon>
        <taxon>Bacteroidota</taxon>
        <taxon>Flavobacteriia</taxon>
        <taxon>Flavobacteriales</taxon>
        <taxon>Flavobacteriaceae</taxon>
        <taxon>Flavobacterium</taxon>
    </lineage>
</organism>
<name>HIS6_FLAPJ</name>
<dbReference type="EC" id="4.3.2.10" evidence="1"/>
<dbReference type="EMBL" id="AM398681">
    <property type="protein sequence ID" value="CAL43048.1"/>
    <property type="molecule type" value="Genomic_DNA"/>
</dbReference>
<dbReference type="RefSeq" id="WP_011963102.1">
    <property type="nucleotide sequence ID" value="NC_009613.3"/>
</dbReference>
<dbReference type="RefSeq" id="YP_001295862.1">
    <property type="nucleotide sequence ID" value="NC_009613.3"/>
</dbReference>
<dbReference type="SMR" id="A6GY75"/>
<dbReference type="STRING" id="402612.FP0954"/>
<dbReference type="EnsemblBacteria" id="CAL43048">
    <property type="protein sequence ID" value="CAL43048"/>
    <property type="gene ID" value="FP0954"/>
</dbReference>
<dbReference type="GeneID" id="66552352"/>
<dbReference type="KEGG" id="fps:FP0954"/>
<dbReference type="PATRIC" id="fig|402612.5.peg.965"/>
<dbReference type="eggNOG" id="COG0107">
    <property type="taxonomic scope" value="Bacteria"/>
</dbReference>
<dbReference type="HOGENOM" id="CLU_048577_4_0_10"/>
<dbReference type="OrthoDB" id="9781903at2"/>
<dbReference type="UniPathway" id="UPA00031">
    <property type="reaction ID" value="UER00010"/>
</dbReference>
<dbReference type="Proteomes" id="UP000006394">
    <property type="component" value="Chromosome"/>
</dbReference>
<dbReference type="GO" id="GO:0005737">
    <property type="term" value="C:cytoplasm"/>
    <property type="evidence" value="ECO:0007669"/>
    <property type="project" value="UniProtKB-SubCell"/>
</dbReference>
<dbReference type="GO" id="GO:0000107">
    <property type="term" value="F:imidazoleglycerol-phosphate synthase activity"/>
    <property type="evidence" value="ECO:0007669"/>
    <property type="project" value="UniProtKB-UniRule"/>
</dbReference>
<dbReference type="GO" id="GO:0016829">
    <property type="term" value="F:lyase activity"/>
    <property type="evidence" value="ECO:0007669"/>
    <property type="project" value="UniProtKB-KW"/>
</dbReference>
<dbReference type="GO" id="GO:0000105">
    <property type="term" value="P:L-histidine biosynthetic process"/>
    <property type="evidence" value="ECO:0007669"/>
    <property type="project" value="UniProtKB-UniRule"/>
</dbReference>
<dbReference type="CDD" id="cd04731">
    <property type="entry name" value="HisF"/>
    <property type="match status" value="1"/>
</dbReference>
<dbReference type="FunFam" id="3.20.20.70:FF:000006">
    <property type="entry name" value="Imidazole glycerol phosphate synthase subunit HisF"/>
    <property type="match status" value="1"/>
</dbReference>
<dbReference type="Gene3D" id="3.20.20.70">
    <property type="entry name" value="Aldolase class I"/>
    <property type="match status" value="1"/>
</dbReference>
<dbReference type="HAMAP" id="MF_01013">
    <property type="entry name" value="HisF"/>
    <property type="match status" value="1"/>
</dbReference>
<dbReference type="InterPro" id="IPR013785">
    <property type="entry name" value="Aldolase_TIM"/>
</dbReference>
<dbReference type="InterPro" id="IPR006062">
    <property type="entry name" value="His_biosynth"/>
</dbReference>
<dbReference type="InterPro" id="IPR004651">
    <property type="entry name" value="HisF"/>
</dbReference>
<dbReference type="InterPro" id="IPR050064">
    <property type="entry name" value="IGPS_HisA/HisF"/>
</dbReference>
<dbReference type="InterPro" id="IPR011060">
    <property type="entry name" value="RibuloseP-bd_barrel"/>
</dbReference>
<dbReference type="NCBIfam" id="TIGR00735">
    <property type="entry name" value="hisF"/>
    <property type="match status" value="1"/>
</dbReference>
<dbReference type="PANTHER" id="PTHR21235:SF2">
    <property type="entry name" value="IMIDAZOLE GLYCEROL PHOSPHATE SYNTHASE HISHF"/>
    <property type="match status" value="1"/>
</dbReference>
<dbReference type="PANTHER" id="PTHR21235">
    <property type="entry name" value="IMIDAZOLE GLYCEROL PHOSPHATE SYNTHASE SUBUNIT HISF/H IGP SYNTHASE SUBUNIT HISF/H"/>
    <property type="match status" value="1"/>
</dbReference>
<dbReference type="Pfam" id="PF00977">
    <property type="entry name" value="His_biosynth"/>
    <property type="match status" value="1"/>
</dbReference>
<dbReference type="SUPFAM" id="SSF51366">
    <property type="entry name" value="Ribulose-phoshate binding barrel"/>
    <property type="match status" value="1"/>
</dbReference>
<keyword id="KW-0028">Amino-acid biosynthesis</keyword>
<keyword id="KW-0963">Cytoplasm</keyword>
<keyword id="KW-0368">Histidine biosynthesis</keyword>
<keyword id="KW-0456">Lyase</keyword>
<keyword id="KW-1185">Reference proteome</keyword>
<evidence type="ECO:0000255" key="1">
    <source>
        <dbReference type="HAMAP-Rule" id="MF_01013"/>
    </source>
</evidence>
<gene>
    <name evidence="1" type="primary">hisF</name>
    <name type="ordered locus">FP0954</name>
</gene>
<comment type="function">
    <text evidence="1">IGPS catalyzes the conversion of PRFAR and glutamine to IGP, AICAR and glutamate. The HisF subunit catalyzes the cyclization activity that produces IGP and AICAR from PRFAR using the ammonia provided by the HisH subunit.</text>
</comment>
<comment type="catalytic activity">
    <reaction evidence="1">
        <text>5-[(5-phospho-1-deoxy-D-ribulos-1-ylimino)methylamino]-1-(5-phospho-beta-D-ribosyl)imidazole-4-carboxamide + L-glutamine = D-erythro-1-(imidazol-4-yl)glycerol 3-phosphate + 5-amino-1-(5-phospho-beta-D-ribosyl)imidazole-4-carboxamide + L-glutamate + H(+)</text>
        <dbReference type="Rhea" id="RHEA:24793"/>
        <dbReference type="ChEBI" id="CHEBI:15378"/>
        <dbReference type="ChEBI" id="CHEBI:29985"/>
        <dbReference type="ChEBI" id="CHEBI:58278"/>
        <dbReference type="ChEBI" id="CHEBI:58359"/>
        <dbReference type="ChEBI" id="CHEBI:58475"/>
        <dbReference type="ChEBI" id="CHEBI:58525"/>
        <dbReference type="EC" id="4.3.2.10"/>
    </reaction>
</comment>
<comment type="pathway">
    <text evidence="1">Amino-acid biosynthesis; L-histidine biosynthesis; L-histidine from 5-phospho-alpha-D-ribose 1-diphosphate: step 5/9.</text>
</comment>
<comment type="subunit">
    <text evidence="1">Heterodimer of HisH and HisF.</text>
</comment>
<comment type="subcellular location">
    <subcellularLocation>
        <location evidence="1">Cytoplasm</location>
    </subcellularLocation>
</comment>
<comment type="similarity">
    <text evidence="1">Belongs to the HisA/HisF family.</text>
</comment>
<reference key="1">
    <citation type="journal article" date="2007" name="Nat. Biotechnol.">
        <title>Complete genome sequence of the fish pathogen Flavobacterium psychrophilum.</title>
        <authorList>
            <person name="Duchaud E."/>
            <person name="Boussaha M."/>
            <person name="Loux V."/>
            <person name="Bernardet J.-F."/>
            <person name="Michel C."/>
            <person name="Kerouault B."/>
            <person name="Mondot S."/>
            <person name="Nicolas P."/>
            <person name="Bossy R."/>
            <person name="Caron C."/>
            <person name="Bessieres P."/>
            <person name="Gibrat J.-F."/>
            <person name="Claverol S."/>
            <person name="Dumetz F."/>
            <person name="Le Henaff M."/>
            <person name="Benmansour A."/>
        </authorList>
    </citation>
    <scope>NUCLEOTIDE SEQUENCE [LARGE SCALE GENOMIC DNA]</scope>
    <source>
        <strain>ATCC 49511 / DSM 21280 / CIP 103535 / JIP02/86</strain>
    </source>
</reference>
<feature type="chain" id="PRO_1000063062" description="Imidazole glycerol phosphate synthase subunit HisF">
    <location>
        <begin position="1"/>
        <end position="251"/>
    </location>
</feature>
<feature type="active site" evidence="1">
    <location>
        <position position="11"/>
    </location>
</feature>
<feature type="active site" evidence="1">
    <location>
        <position position="130"/>
    </location>
</feature>
<proteinExistence type="inferred from homology"/>
<accession>A6GY75</accession>
<protein>
    <recommendedName>
        <fullName evidence="1">Imidazole glycerol phosphate synthase subunit HisF</fullName>
        <ecNumber evidence="1">4.3.2.10</ecNumber>
    </recommendedName>
    <alternativeName>
        <fullName evidence="1">IGP synthase cyclase subunit</fullName>
    </alternativeName>
    <alternativeName>
        <fullName evidence="1">IGP synthase subunit HisF</fullName>
    </alternativeName>
    <alternativeName>
        <fullName evidence="1">ImGP synthase subunit HisF</fullName>
        <shortName evidence="1">IGPS subunit HisF</shortName>
    </alternativeName>
</protein>
<sequence>MLTKRIIPCLDIKNGRTVKGVNFLDLKDAGDPVALAQKYAEEGADELVFLDISATEEDRKTVIDLVRKVSETINIPFTVGGGISSVNDVEILLKNGADKVSINSSAVKNPQLINDLASAFGSQCIVVAIDAKQINGNWKVHLVGGKVATEIDLFDWAKEVENRGAGEILFTSMDHDGTKNGFANEALAKLSQTVNIPIIASGGAGTMQHFADAFLLGNADAALAASVFHFQEIRIQDLKIALKNNTIQIRL</sequence>